<organism>
    <name type="scientific">Saccharomyces cerevisiae (strain ATCC 204508 / S288c)</name>
    <name type="common">Baker's yeast</name>
    <dbReference type="NCBI Taxonomy" id="559292"/>
    <lineage>
        <taxon>Eukaryota</taxon>
        <taxon>Fungi</taxon>
        <taxon>Dikarya</taxon>
        <taxon>Ascomycota</taxon>
        <taxon>Saccharomycotina</taxon>
        <taxon>Saccharomycetes</taxon>
        <taxon>Saccharomycetales</taxon>
        <taxon>Saccharomycetaceae</taxon>
        <taxon>Saccharomyces</taxon>
    </lineage>
</organism>
<comment type="similarity">
    <text evidence="1">Belongs to the eukaryotic release factor 1 family. Pelota subfamily. Highly divergent.</text>
</comment>
<reference key="1">
    <citation type="journal article" date="1992" name="Nature">
        <title>The complete DNA sequence of yeast chromosome III.</title>
        <authorList>
            <person name="Oliver S.G."/>
            <person name="van der Aart Q.J.M."/>
            <person name="Agostoni-Carbone M.L."/>
            <person name="Aigle M."/>
            <person name="Alberghina L."/>
            <person name="Alexandraki D."/>
            <person name="Antoine G."/>
            <person name="Anwar R."/>
            <person name="Ballesta J.P.G."/>
            <person name="Benit P."/>
            <person name="Berben G."/>
            <person name="Bergantino E."/>
            <person name="Biteau N."/>
            <person name="Bolle P.-A."/>
            <person name="Bolotin-Fukuhara M."/>
            <person name="Brown A."/>
            <person name="Brown A.J.P."/>
            <person name="Buhler J.-M."/>
            <person name="Carcano C."/>
            <person name="Carignani G."/>
            <person name="Cederberg H."/>
            <person name="Chanet R."/>
            <person name="Contreras R."/>
            <person name="Crouzet M."/>
            <person name="Daignan-Fornier B."/>
            <person name="Defoor E."/>
            <person name="Delgado M.D."/>
            <person name="Demolder J."/>
            <person name="Doira C."/>
            <person name="Dubois E."/>
            <person name="Dujon B."/>
            <person name="Duesterhoeft A."/>
            <person name="Erdmann D."/>
            <person name="Esteban M."/>
            <person name="Fabre F."/>
            <person name="Fairhead C."/>
            <person name="Faye G."/>
            <person name="Feldmann H."/>
            <person name="Fiers W."/>
            <person name="Francingues-Gaillard M.-C."/>
            <person name="Franco L."/>
            <person name="Frontali L."/>
            <person name="Fukuhara H."/>
            <person name="Fuller L.J."/>
            <person name="Galland P."/>
            <person name="Gent M.E."/>
            <person name="Gigot D."/>
            <person name="Gilliquet V."/>
            <person name="Glansdorff N."/>
            <person name="Goffeau A."/>
            <person name="Grenson M."/>
            <person name="Grisanti P."/>
            <person name="Grivell L.A."/>
            <person name="de Haan M."/>
            <person name="Haasemann M."/>
            <person name="Hatat D."/>
            <person name="Hoenicka J."/>
            <person name="Hegemann J.H."/>
            <person name="Herbert C.J."/>
            <person name="Hilger F."/>
            <person name="Hohmann S."/>
            <person name="Hollenberg C.P."/>
            <person name="Huse K."/>
            <person name="Iborra F."/>
            <person name="Indge K.J."/>
            <person name="Isono K."/>
            <person name="Jacq C."/>
            <person name="Jacquet M."/>
            <person name="James C.M."/>
            <person name="Jauniaux J.-C."/>
            <person name="Jia Y."/>
            <person name="Jimenez A."/>
            <person name="Kelly A."/>
            <person name="Kleinhans U."/>
            <person name="Kreisl P."/>
            <person name="Lanfranchi G."/>
            <person name="Lewis C."/>
            <person name="van der Linden C.G."/>
            <person name="Lucchini G."/>
            <person name="Lutzenkirchen K."/>
            <person name="Maat M.J."/>
            <person name="Mallet L."/>
            <person name="Mannhaupt G."/>
            <person name="Martegani E."/>
            <person name="Mathieu A."/>
            <person name="Maurer C.T.C."/>
            <person name="McConnell D."/>
            <person name="McKee R.A."/>
            <person name="Messenguy F."/>
            <person name="Mewes H.-W."/>
            <person name="Molemans F."/>
            <person name="Montague M.A."/>
            <person name="Muzi Falconi M."/>
            <person name="Navas L."/>
            <person name="Newlon C.S."/>
            <person name="Noone D."/>
            <person name="Pallier C."/>
            <person name="Panzeri L."/>
            <person name="Pearson B.M."/>
            <person name="Perea J."/>
            <person name="Philippsen P."/>
            <person name="Pierard A."/>
            <person name="Planta R.J."/>
            <person name="Plevani P."/>
            <person name="Poetsch B."/>
            <person name="Pohl F.M."/>
            <person name="Purnelle B."/>
            <person name="Ramezani Rad M."/>
            <person name="Rasmussen S.W."/>
            <person name="Raynal A."/>
            <person name="Remacha M.A."/>
            <person name="Richterich P."/>
            <person name="Roberts A.B."/>
            <person name="Rodriguez F."/>
            <person name="Sanz E."/>
            <person name="Schaaff-Gerstenschlaeger I."/>
            <person name="Scherens B."/>
            <person name="Schweitzer B."/>
            <person name="Shu Y."/>
            <person name="Skala J."/>
            <person name="Slonimski P.P."/>
            <person name="Sor F."/>
            <person name="Soustelle C."/>
            <person name="Spiegelberg R."/>
            <person name="Stateva L.I."/>
            <person name="Steensma H.Y."/>
            <person name="Steiner S."/>
            <person name="Thierry A."/>
            <person name="Thireos G."/>
            <person name="Tzermia M."/>
            <person name="Urrestarazu L.A."/>
            <person name="Valle G."/>
            <person name="Vetter I."/>
            <person name="van Vliet-Reedijk J.C."/>
            <person name="Voet M."/>
            <person name="Volckaert G."/>
            <person name="Vreken P."/>
            <person name="Wang H."/>
            <person name="Warmington J.R."/>
            <person name="von Wettstein D."/>
            <person name="Wicksteed B.L."/>
            <person name="Wilson C."/>
            <person name="Wurst H."/>
            <person name="Xu G."/>
            <person name="Yoshikawa A."/>
            <person name="Zimmermann F.K."/>
            <person name="Sgouros J.G."/>
        </authorList>
    </citation>
    <scope>NUCLEOTIDE SEQUENCE [LARGE SCALE GENOMIC DNA]</scope>
    <source>
        <strain>ATCC 204508 / S288c</strain>
    </source>
</reference>
<reference key="2">
    <citation type="journal article" date="2014" name="G3 (Bethesda)">
        <title>The reference genome sequence of Saccharomyces cerevisiae: Then and now.</title>
        <authorList>
            <person name="Engel S.R."/>
            <person name="Dietrich F.S."/>
            <person name="Fisk D.G."/>
            <person name="Binkley G."/>
            <person name="Balakrishnan R."/>
            <person name="Costanzo M.C."/>
            <person name="Dwight S.S."/>
            <person name="Hitz B.C."/>
            <person name="Karra K."/>
            <person name="Nash R.S."/>
            <person name="Weng S."/>
            <person name="Wong E.D."/>
            <person name="Lloyd P."/>
            <person name="Skrzypek M.S."/>
            <person name="Miyasato S.R."/>
            <person name="Simison M."/>
            <person name="Cherry J.M."/>
        </authorList>
    </citation>
    <scope>GENOME REANNOTATION</scope>
    <source>
        <strain>ATCC 204508 / S288c</strain>
    </source>
</reference>
<reference key="3">
    <citation type="journal article" date="2000" name="FEBS Lett.">
        <title>Genomic exploration of the hemiascomycetous yeasts: 4. The genome of Saccharomyces cerevisiae revisited.</title>
        <authorList>
            <person name="Blandin G."/>
            <person name="Durrens P."/>
            <person name="Tekaia F."/>
            <person name="Aigle M."/>
            <person name="Bolotin-Fukuhara M."/>
            <person name="Bon E."/>
            <person name="Casaregola S."/>
            <person name="de Montigny J."/>
            <person name="Gaillardin C."/>
            <person name="Lepingle A."/>
            <person name="Llorente B."/>
            <person name="Malpertuy A."/>
            <person name="Neuveglise C."/>
            <person name="Ozier-Kalogeropoulos O."/>
            <person name="Perrin A."/>
            <person name="Potier S."/>
            <person name="Souciet J.-L."/>
            <person name="Talla E."/>
            <person name="Toffano-Nioche C."/>
            <person name="Wesolowski-Louvel M."/>
            <person name="Marck C."/>
            <person name="Dujon B."/>
        </authorList>
    </citation>
    <scope>GENOME REANNOTATION</scope>
</reference>
<dbReference type="EMBL" id="X59720">
    <property type="protein sequence ID" value="CAC42969.1"/>
    <property type="molecule type" value="Genomic_DNA"/>
</dbReference>
<dbReference type="EMBL" id="BK006937">
    <property type="protein sequence ID" value="DAA07480.1"/>
    <property type="molecule type" value="Genomic_DNA"/>
</dbReference>
<dbReference type="RefSeq" id="NP_076878.1">
    <property type="nucleotide sequence ID" value="NM_001184462.1"/>
</dbReference>
<dbReference type="SMR" id="Q96VH2"/>
<dbReference type="BioGRID" id="30979">
    <property type="interactions" value="104"/>
</dbReference>
<dbReference type="FunCoup" id="Q96VH2">
    <property type="interactions" value="6"/>
</dbReference>
<dbReference type="STRING" id="4932.YCL001W-B"/>
<dbReference type="PaxDb" id="4932-YCL001W-B"/>
<dbReference type="EnsemblFungi" id="YCL001W-B_mRNA">
    <property type="protein sequence ID" value="YCL001W-B"/>
    <property type="gene ID" value="YCL001W-B"/>
</dbReference>
<dbReference type="GeneID" id="850356"/>
<dbReference type="KEGG" id="sce:YCL001W-B"/>
<dbReference type="AGR" id="SGD:S000007596"/>
<dbReference type="SGD" id="S000007596">
    <property type="gene designation" value="YCL001W-B"/>
</dbReference>
<dbReference type="VEuPathDB" id="FungiDB:YCL001W-B"/>
<dbReference type="eggNOG" id="KOG2869">
    <property type="taxonomic scope" value="Eukaryota"/>
</dbReference>
<dbReference type="GeneTree" id="ENSGT00390000016326"/>
<dbReference type="HOGENOM" id="CLU_2529186_0_0_1"/>
<dbReference type="InParanoid" id="Q96VH2"/>
<dbReference type="OrthoDB" id="10249111at2759"/>
<dbReference type="BioCyc" id="YEAST:G3O-29422-MONOMER"/>
<dbReference type="BioGRID-ORCS" id="850356">
    <property type="hits" value="0 hits in 10 CRISPR screens"/>
</dbReference>
<dbReference type="PRO" id="PR:Q96VH2"/>
<dbReference type="Proteomes" id="UP000002311">
    <property type="component" value="Chromosome III"/>
</dbReference>
<dbReference type="RNAct" id="Q96VH2">
    <property type="molecule type" value="protein"/>
</dbReference>
<dbReference type="GO" id="GO:0070966">
    <property type="term" value="P:nuclear-transcribed mRNA catabolic process, no-go decay"/>
    <property type="evidence" value="ECO:0007669"/>
    <property type="project" value="InterPro"/>
</dbReference>
<dbReference type="GO" id="GO:0070481">
    <property type="term" value="P:nuclear-transcribed mRNA catabolic process, non-stop decay"/>
    <property type="evidence" value="ECO:0007669"/>
    <property type="project" value="InterPro"/>
</dbReference>
<dbReference type="GO" id="GO:0071025">
    <property type="term" value="P:RNA surveillance"/>
    <property type="evidence" value="ECO:0007669"/>
    <property type="project" value="InterPro"/>
</dbReference>
<dbReference type="FunFam" id="3.30.1330.30:FF:000066">
    <property type="entry name" value="Conserved protein"/>
    <property type="match status" value="1"/>
</dbReference>
<dbReference type="Gene3D" id="3.30.1330.30">
    <property type="match status" value="1"/>
</dbReference>
<dbReference type="InterPro" id="IPR005142">
    <property type="entry name" value="eRF1_3"/>
</dbReference>
<dbReference type="InterPro" id="IPR029064">
    <property type="entry name" value="Ribosomal_eL30-like_sf"/>
</dbReference>
<dbReference type="InterPro" id="IPR004405">
    <property type="entry name" value="Transl-rel_pelota"/>
</dbReference>
<dbReference type="PANTHER" id="PTHR10853">
    <property type="entry name" value="PELOTA"/>
    <property type="match status" value="1"/>
</dbReference>
<dbReference type="PANTHER" id="PTHR10853:SF0">
    <property type="entry name" value="PROTEIN PELOTA HOMOLOG"/>
    <property type="match status" value="1"/>
</dbReference>
<dbReference type="Pfam" id="PF03465">
    <property type="entry name" value="eRF1_3"/>
    <property type="match status" value="1"/>
</dbReference>
<dbReference type="SUPFAM" id="SSF55315">
    <property type="entry name" value="L30e-like"/>
    <property type="match status" value="1"/>
</dbReference>
<name>YC01B_YEAST</name>
<gene>
    <name type="ordered locus">YCL001W-B</name>
</gene>
<evidence type="ECO:0000305" key="1"/>
<accession>Q96VH2</accession>
<accession>D6VR11</accession>
<protein>
    <recommendedName>
        <fullName>Putative pelota-like protein YCL001W-B</fullName>
    </recommendedName>
</protein>
<feature type="chain" id="PRO_0000248412" description="Putative pelota-like protein YCL001W-B">
    <location>
        <begin position="1"/>
        <end position="84"/>
    </location>
</feature>
<keyword id="KW-1185">Reference proteome</keyword>
<sequence length="84" mass="9572">MDDFLEHLSKDDNKAWYGAEETERAAKLDAIETLLITDSVLKRNDVKKREKYLDLIENSGNNNGKIFVLSTSKITVSNLTNQQI</sequence>
<proteinExistence type="inferred from homology"/>